<gene>
    <name type="primary">RhoGAP92B</name>
    <name type="ORF">CG4755</name>
</gene>
<accession>Q9VDS5</accession>
<accession>Q8T3Q3</accession>
<organism>
    <name type="scientific">Drosophila melanogaster</name>
    <name type="common">Fruit fly</name>
    <dbReference type="NCBI Taxonomy" id="7227"/>
    <lineage>
        <taxon>Eukaryota</taxon>
        <taxon>Metazoa</taxon>
        <taxon>Ecdysozoa</taxon>
        <taxon>Arthropoda</taxon>
        <taxon>Hexapoda</taxon>
        <taxon>Insecta</taxon>
        <taxon>Pterygota</taxon>
        <taxon>Neoptera</taxon>
        <taxon>Endopterygota</taxon>
        <taxon>Diptera</taxon>
        <taxon>Brachycera</taxon>
        <taxon>Muscomorpha</taxon>
        <taxon>Ephydroidea</taxon>
        <taxon>Drosophilidae</taxon>
        <taxon>Drosophila</taxon>
        <taxon>Sophophora</taxon>
    </lineage>
</organism>
<feature type="chain" id="PRO_0000347177" description="Rho GTPase-activating protein 92B">
    <location>
        <begin position="1"/>
        <end position="740"/>
    </location>
</feature>
<feature type="domain" description="BAR">
    <location>
        <begin position="13"/>
        <end position="246"/>
    </location>
</feature>
<feature type="domain" description="Rho-GAP" evidence="2">
    <location>
        <begin position="251"/>
        <end position="448"/>
    </location>
</feature>
<feature type="region of interest" description="Disordered" evidence="3">
    <location>
        <begin position="49"/>
        <end position="74"/>
    </location>
</feature>
<feature type="region of interest" description="Disordered" evidence="3">
    <location>
        <begin position="467"/>
        <end position="740"/>
    </location>
</feature>
<feature type="compositionally biased region" description="Polar residues" evidence="3">
    <location>
        <begin position="506"/>
        <end position="520"/>
    </location>
</feature>
<feature type="compositionally biased region" description="Pro residues" evidence="3">
    <location>
        <begin position="566"/>
        <end position="577"/>
    </location>
</feature>
<feature type="compositionally biased region" description="Polar residues" evidence="3">
    <location>
        <begin position="643"/>
        <end position="655"/>
    </location>
</feature>
<feature type="compositionally biased region" description="Basic and acidic residues" evidence="3">
    <location>
        <begin position="659"/>
        <end position="672"/>
    </location>
</feature>
<feature type="compositionally biased region" description="Polar residues" evidence="3">
    <location>
        <begin position="673"/>
        <end position="686"/>
    </location>
</feature>
<feature type="compositionally biased region" description="Low complexity" evidence="3">
    <location>
        <begin position="694"/>
        <end position="713"/>
    </location>
</feature>
<feature type="compositionally biased region" description="Pro residues" evidence="3">
    <location>
        <begin position="725"/>
        <end position="734"/>
    </location>
</feature>
<feature type="site" description="Arginine finger; crucial for GTP hydrolysis by stabilizing the transition state" evidence="2">
    <location>
        <position position="287"/>
    </location>
</feature>
<feature type="modified residue" description="Phosphoserine" evidence="5">
    <location>
        <position position="469"/>
    </location>
</feature>
<feature type="modified residue" description="Phosphoserine" evidence="5">
    <location>
        <position position="473"/>
    </location>
</feature>
<feature type="modified residue" description="Phosphoserine" evidence="4">
    <location>
        <position position="593"/>
    </location>
</feature>
<feature type="modified residue" description="Phosphothreonine" evidence="4">
    <location>
        <position position="595"/>
    </location>
</feature>
<feature type="modified residue" description="Phosphoserine" evidence="5">
    <location>
        <position position="715"/>
    </location>
</feature>
<feature type="modified residue" description="Phosphothreonine" evidence="5">
    <location>
        <position position="721"/>
    </location>
</feature>
<feature type="modified residue" description="Phosphoserine" evidence="5">
    <location>
        <position position="738"/>
    </location>
</feature>
<feature type="modified residue" description="Phosphoserine" evidence="5">
    <location>
        <position position="739"/>
    </location>
</feature>
<feature type="sequence conflict" description="In Ref. 3; AAM11006." evidence="6" ref="3">
    <original>I</original>
    <variation>T</variation>
    <location>
        <position position="512"/>
    </location>
</feature>
<comment type="function">
    <text evidence="1">GTPase activator for the Rho-type GTPases by converting them to an inactive GDP-bound state.</text>
</comment>
<evidence type="ECO:0000250" key="1"/>
<evidence type="ECO:0000255" key="2">
    <source>
        <dbReference type="PROSITE-ProRule" id="PRU00172"/>
    </source>
</evidence>
<evidence type="ECO:0000256" key="3">
    <source>
        <dbReference type="SAM" id="MobiDB-lite"/>
    </source>
</evidence>
<evidence type="ECO:0000269" key="4">
    <source>
    </source>
</evidence>
<evidence type="ECO:0000269" key="5">
    <source>
    </source>
</evidence>
<evidence type="ECO:0000305" key="6"/>
<keyword id="KW-0175">Coiled coil</keyword>
<keyword id="KW-0343">GTPase activation</keyword>
<keyword id="KW-0597">Phosphoprotein</keyword>
<keyword id="KW-1185">Reference proteome</keyword>
<proteinExistence type="evidence at protein level"/>
<sequence length="740" mass="83085">MKRQFAKIKIAAENLSRSSKSDSKDSELEAIERQVDRYRDTIEKIVRKLPALSGGGGSGSGSSEEQDKRTKKNSHYKIAQALDESAKELPKDMPLQKVLANCGELEKTMAECIIESELETEAKVVRRLKNILDKEIQEISTLKRNVSRTLQEYTSLKRSHEAAIRLEEPAAKVNHIKSQQEECELKLEKERDAWAAQMLELIAKEDEIVSCIRDYVLNQRNYHERALQHVNASLARIQDTIQGTEKSRFGTSLKEHLTSTNREISYIVELCCCCLLEHGLEEEGLLRVGCASTKLRRMKHALEAQHVKTPLPLDYQDPHVIGSILKLYLRELPEPLLTYNLYKDFIRIAERHSEAERKTEIKAILTKLPKENYANLRYLTRFLSIVQQRSALNKMSSQNLAIVMSPNMLWPRIDKSSNAPADYIGQVNSSSAANIIVELLISQWDYFFIGEVEFYLTLQKQKLFVEGKSKSNSSNENLDRNDSEVMESPRYGTLRRQKANAPSPPTTNGNGIIMTTSQTSHRPHAKELFPQQTPEKQEKPAKPPLPNLPQFQSPAASQPTQTQLEPLPPPPVTPAKPVPMTRTQFFGLDNLPSPTADRKSTDSIGSFKLKPDVPQKPLLPKRPTVLGVGVPKADGKSDDEGGTTPTQATIDNGNGSVRFKTEHFLDKLRQENGETNGTREVSSTTKENNHNHDPPATAADQNQQQAQPQVTTPISPNSFQTPKRPTVPAPPPPTNWKSSD</sequence>
<name>RG92B_DROME</name>
<protein>
    <recommendedName>
        <fullName>Rho GTPase-activating protein 92B</fullName>
    </recommendedName>
</protein>
<reference key="1">
    <citation type="journal article" date="2000" name="Science">
        <title>The genome sequence of Drosophila melanogaster.</title>
        <authorList>
            <person name="Adams M.D."/>
            <person name="Celniker S.E."/>
            <person name="Holt R.A."/>
            <person name="Evans C.A."/>
            <person name="Gocayne J.D."/>
            <person name="Amanatides P.G."/>
            <person name="Scherer S.E."/>
            <person name="Li P.W."/>
            <person name="Hoskins R.A."/>
            <person name="Galle R.F."/>
            <person name="George R.A."/>
            <person name="Lewis S.E."/>
            <person name="Richards S."/>
            <person name="Ashburner M."/>
            <person name="Henderson S.N."/>
            <person name="Sutton G.G."/>
            <person name="Wortman J.R."/>
            <person name="Yandell M.D."/>
            <person name="Zhang Q."/>
            <person name="Chen L.X."/>
            <person name="Brandon R.C."/>
            <person name="Rogers Y.-H.C."/>
            <person name="Blazej R.G."/>
            <person name="Champe M."/>
            <person name="Pfeiffer B.D."/>
            <person name="Wan K.H."/>
            <person name="Doyle C."/>
            <person name="Baxter E.G."/>
            <person name="Helt G."/>
            <person name="Nelson C.R."/>
            <person name="Miklos G.L.G."/>
            <person name="Abril J.F."/>
            <person name="Agbayani A."/>
            <person name="An H.-J."/>
            <person name="Andrews-Pfannkoch C."/>
            <person name="Baldwin D."/>
            <person name="Ballew R.M."/>
            <person name="Basu A."/>
            <person name="Baxendale J."/>
            <person name="Bayraktaroglu L."/>
            <person name="Beasley E.M."/>
            <person name="Beeson K.Y."/>
            <person name="Benos P.V."/>
            <person name="Berman B.P."/>
            <person name="Bhandari D."/>
            <person name="Bolshakov S."/>
            <person name="Borkova D."/>
            <person name="Botchan M.R."/>
            <person name="Bouck J."/>
            <person name="Brokstein P."/>
            <person name="Brottier P."/>
            <person name="Burtis K.C."/>
            <person name="Busam D.A."/>
            <person name="Butler H."/>
            <person name="Cadieu E."/>
            <person name="Center A."/>
            <person name="Chandra I."/>
            <person name="Cherry J.M."/>
            <person name="Cawley S."/>
            <person name="Dahlke C."/>
            <person name="Davenport L.B."/>
            <person name="Davies P."/>
            <person name="de Pablos B."/>
            <person name="Delcher A."/>
            <person name="Deng Z."/>
            <person name="Mays A.D."/>
            <person name="Dew I."/>
            <person name="Dietz S.M."/>
            <person name="Dodson K."/>
            <person name="Doup L.E."/>
            <person name="Downes M."/>
            <person name="Dugan-Rocha S."/>
            <person name="Dunkov B.C."/>
            <person name="Dunn P."/>
            <person name="Durbin K.J."/>
            <person name="Evangelista C.C."/>
            <person name="Ferraz C."/>
            <person name="Ferriera S."/>
            <person name="Fleischmann W."/>
            <person name="Fosler C."/>
            <person name="Gabrielian A.E."/>
            <person name="Garg N.S."/>
            <person name="Gelbart W.M."/>
            <person name="Glasser K."/>
            <person name="Glodek A."/>
            <person name="Gong F."/>
            <person name="Gorrell J.H."/>
            <person name="Gu Z."/>
            <person name="Guan P."/>
            <person name="Harris M."/>
            <person name="Harris N.L."/>
            <person name="Harvey D.A."/>
            <person name="Heiman T.J."/>
            <person name="Hernandez J.R."/>
            <person name="Houck J."/>
            <person name="Hostin D."/>
            <person name="Houston K.A."/>
            <person name="Howland T.J."/>
            <person name="Wei M.-H."/>
            <person name="Ibegwam C."/>
            <person name="Jalali M."/>
            <person name="Kalush F."/>
            <person name="Karpen G.H."/>
            <person name="Ke Z."/>
            <person name="Kennison J.A."/>
            <person name="Ketchum K.A."/>
            <person name="Kimmel B.E."/>
            <person name="Kodira C.D."/>
            <person name="Kraft C.L."/>
            <person name="Kravitz S."/>
            <person name="Kulp D."/>
            <person name="Lai Z."/>
            <person name="Lasko P."/>
            <person name="Lei Y."/>
            <person name="Levitsky A.A."/>
            <person name="Li J.H."/>
            <person name="Li Z."/>
            <person name="Liang Y."/>
            <person name="Lin X."/>
            <person name="Liu X."/>
            <person name="Mattei B."/>
            <person name="McIntosh T.C."/>
            <person name="McLeod M.P."/>
            <person name="McPherson D."/>
            <person name="Merkulov G."/>
            <person name="Milshina N.V."/>
            <person name="Mobarry C."/>
            <person name="Morris J."/>
            <person name="Moshrefi A."/>
            <person name="Mount S.M."/>
            <person name="Moy M."/>
            <person name="Murphy B."/>
            <person name="Murphy L."/>
            <person name="Muzny D.M."/>
            <person name="Nelson D.L."/>
            <person name="Nelson D.R."/>
            <person name="Nelson K.A."/>
            <person name="Nixon K."/>
            <person name="Nusskern D.R."/>
            <person name="Pacleb J.M."/>
            <person name="Palazzolo M."/>
            <person name="Pittman G.S."/>
            <person name="Pan S."/>
            <person name="Pollard J."/>
            <person name="Puri V."/>
            <person name="Reese M.G."/>
            <person name="Reinert K."/>
            <person name="Remington K."/>
            <person name="Saunders R.D.C."/>
            <person name="Scheeler F."/>
            <person name="Shen H."/>
            <person name="Shue B.C."/>
            <person name="Siden-Kiamos I."/>
            <person name="Simpson M."/>
            <person name="Skupski M.P."/>
            <person name="Smith T.J."/>
            <person name="Spier E."/>
            <person name="Spradling A.C."/>
            <person name="Stapleton M."/>
            <person name="Strong R."/>
            <person name="Sun E."/>
            <person name="Svirskas R."/>
            <person name="Tector C."/>
            <person name="Turner R."/>
            <person name="Venter E."/>
            <person name="Wang A.H."/>
            <person name="Wang X."/>
            <person name="Wang Z.-Y."/>
            <person name="Wassarman D.A."/>
            <person name="Weinstock G.M."/>
            <person name="Weissenbach J."/>
            <person name="Williams S.M."/>
            <person name="Woodage T."/>
            <person name="Worley K.C."/>
            <person name="Wu D."/>
            <person name="Yang S."/>
            <person name="Yao Q.A."/>
            <person name="Ye J."/>
            <person name="Yeh R.-F."/>
            <person name="Zaveri J.S."/>
            <person name="Zhan M."/>
            <person name="Zhang G."/>
            <person name="Zhao Q."/>
            <person name="Zheng L."/>
            <person name="Zheng X.H."/>
            <person name="Zhong F.N."/>
            <person name="Zhong W."/>
            <person name="Zhou X."/>
            <person name="Zhu S.C."/>
            <person name="Zhu X."/>
            <person name="Smith H.O."/>
            <person name="Gibbs R.A."/>
            <person name="Myers E.W."/>
            <person name="Rubin G.M."/>
            <person name="Venter J.C."/>
        </authorList>
    </citation>
    <scope>NUCLEOTIDE SEQUENCE [LARGE SCALE GENOMIC DNA]</scope>
    <source>
        <strain>Berkeley</strain>
    </source>
</reference>
<reference key="2">
    <citation type="journal article" date="2002" name="Genome Biol.">
        <title>Annotation of the Drosophila melanogaster euchromatic genome: a systematic review.</title>
        <authorList>
            <person name="Misra S."/>
            <person name="Crosby M.A."/>
            <person name="Mungall C.J."/>
            <person name="Matthews B.B."/>
            <person name="Campbell K.S."/>
            <person name="Hradecky P."/>
            <person name="Huang Y."/>
            <person name="Kaminker J.S."/>
            <person name="Millburn G.H."/>
            <person name="Prochnik S.E."/>
            <person name="Smith C.D."/>
            <person name="Tupy J.L."/>
            <person name="Whitfield E.J."/>
            <person name="Bayraktaroglu L."/>
            <person name="Berman B.P."/>
            <person name="Bettencourt B.R."/>
            <person name="Celniker S.E."/>
            <person name="de Grey A.D.N.J."/>
            <person name="Drysdale R.A."/>
            <person name="Harris N.L."/>
            <person name="Richter J."/>
            <person name="Russo S."/>
            <person name="Schroeder A.J."/>
            <person name="Shu S.Q."/>
            <person name="Stapleton M."/>
            <person name="Yamada C."/>
            <person name="Ashburner M."/>
            <person name="Gelbart W.M."/>
            <person name="Rubin G.M."/>
            <person name="Lewis S.E."/>
        </authorList>
    </citation>
    <scope>GENOME REANNOTATION</scope>
    <source>
        <strain>Berkeley</strain>
    </source>
</reference>
<reference key="3">
    <citation type="journal article" date="2002" name="Genome Biol.">
        <title>A Drosophila full-length cDNA resource.</title>
        <authorList>
            <person name="Stapleton M."/>
            <person name="Carlson J.W."/>
            <person name="Brokstein P."/>
            <person name="Yu C."/>
            <person name="Champe M."/>
            <person name="George R.A."/>
            <person name="Guarin H."/>
            <person name="Kronmiller B."/>
            <person name="Pacleb J.M."/>
            <person name="Park S."/>
            <person name="Wan K.H."/>
            <person name="Rubin G.M."/>
            <person name="Celniker S.E."/>
        </authorList>
    </citation>
    <scope>NUCLEOTIDE SEQUENCE [LARGE SCALE MRNA]</scope>
    <source>
        <strain>Berkeley</strain>
        <tissue>Testis</tissue>
    </source>
</reference>
<reference key="4">
    <citation type="journal article" date="2007" name="Mol. Biosyst.">
        <title>An integrated chemical, mass spectrometric and computational strategy for (quantitative) phosphoproteomics: application to Drosophila melanogaster Kc167 cells.</title>
        <authorList>
            <person name="Bodenmiller B."/>
            <person name="Mueller L.N."/>
            <person name="Pedrioli P.G.A."/>
            <person name="Pflieger D."/>
            <person name="Juenger M.A."/>
            <person name="Eng J.K."/>
            <person name="Aebersold R."/>
            <person name="Tao W.A."/>
        </authorList>
    </citation>
    <scope>PHOSPHORYLATION [LARGE SCALE ANALYSIS] AT SER-593 AND THR-595</scope>
    <scope>IDENTIFICATION BY MASS SPECTROMETRY</scope>
</reference>
<reference key="5">
    <citation type="journal article" date="2008" name="J. Proteome Res.">
        <title>Phosphoproteome analysis of Drosophila melanogaster embryos.</title>
        <authorList>
            <person name="Zhai B."/>
            <person name="Villen J."/>
            <person name="Beausoleil S.A."/>
            <person name="Mintseris J."/>
            <person name="Gygi S.P."/>
        </authorList>
    </citation>
    <scope>PHOSPHORYLATION [LARGE SCALE ANALYSIS] AT SER-469; SER-473; SER-715; THR-721; SER-738 AND SER-739</scope>
    <scope>IDENTIFICATION BY MASS SPECTROMETRY</scope>
    <source>
        <tissue>Embryo</tissue>
    </source>
</reference>
<dbReference type="EMBL" id="AE014297">
    <property type="protein sequence ID" value="AAF55715.1"/>
    <property type="molecule type" value="Genomic_DNA"/>
</dbReference>
<dbReference type="EMBL" id="AY094653">
    <property type="protein sequence ID" value="AAM11006.1"/>
    <property type="molecule type" value="mRNA"/>
</dbReference>
<dbReference type="RefSeq" id="NP_001287417.1">
    <property type="nucleotide sequence ID" value="NM_001300488.1"/>
</dbReference>
<dbReference type="RefSeq" id="NP_650844.1">
    <property type="nucleotide sequence ID" value="NM_142587.3"/>
</dbReference>
<dbReference type="SMR" id="Q9VDS5"/>
<dbReference type="BioGRID" id="67360">
    <property type="interactions" value="45"/>
</dbReference>
<dbReference type="FunCoup" id="Q9VDS5">
    <property type="interactions" value="579"/>
</dbReference>
<dbReference type="IntAct" id="Q9VDS5">
    <property type="interactions" value="3"/>
</dbReference>
<dbReference type="STRING" id="7227.FBpp0310730"/>
<dbReference type="GlyGen" id="Q9VDS5">
    <property type="glycosylation" value="1 site"/>
</dbReference>
<dbReference type="iPTMnet" id="Q9VDS5"/>
<dbReference type="PaxDb" id="7227-FBpp0083230"/>
<dbReference type="DNASU" id="42371"/>
<dbReference type="EnsemblMetazoa" id="FBtr0083821">
    <property type="protein sequence ID" value="FBpp0083230"/>
    <property type="gene ID" value="FBgn0038747"/>
</dbReference>
<dbReference type="EnsemblMetazoa" id="FBtr0344354">
    <property type="protein sequence ID" value="FBpp0310730"/>
    <property type="gene ID" value="FBgn0038747"/>
</dbReference>
<dbReference type="GeneID" id="42371"/>
<dbReference type="KEGG" id="dme:Dmel_CG4755"/>
<dbReference type="UCSC" id="CG4755-RA">
    <property type="organism name" value="d. melanogaster"/>
</dbReference>
<dbReference type="AGR" id="FB:FBgn0038747"/>
<dbReference type="CTD" id="42371"/>
<dbReference type="FlyBase" id="FBgn0038747">
    <property type="gene designation" value="RhoGAP92B"/>
</dbReference>
<dbReference type="VEuPathDB" id="VectorBase:FBgn0038747"/>
<dbReference type="eggNOG" id="KOG4270">
    <property type="taxonomic scope" value="Eukaryota"/>
</dbReference>
<dbReference type="GeneTree" id="ENSGT00940000172069"/>
<dbReference type="InParanoid" id="Q9VDS5"/>
<dbReference type="OMA" id="WDYFFEG"/>
<dbReference type="OrthoDB" id="19923at2759"/>
<dbReference type="PhylomeDB" id="Q9VDS5"/>
<dbReference type="Reactome" id="R-DME-8980692">
    <property type="pathway name" value="RHOA GTPase cycle"/>
</dbReference>
<dbReference type="Reactome" id="R-DME-9013148">
    <property type="pathway name" value="CDC42 GTPase cycle"/>
</dbReference>
<dbReference type="Reactome" id="R-DME-9013149">
    <property type="pathway name" value="RAC1 GTPase cycle"/>
</dbReference>
<dbReference type="Reactome" id="R-DME-9013404">
    <property type="pathway name" value="RAC2 GTPase cycle"/>
</dbReference>
<dbReference type="Reactome" id="R-DME-9013405">
    <property type="pathway name" value="RHOD GTPase cycle"/>
</dbReference>
<dbReference type="Reactome" id="R-DME-9013406">
    <property type="pathway name" value="RHOQ GTPase cycle"/>
</dbReference>
<dbReference type="Reactome" id="R-DME-9013423">
    <property type="pathway name" value="RAC3 GTPase cycle"/>
</dbReference>
<dbReference type="SignaLink" id="Q9VDS5"/>
<dbReference type="BioGRID-ORCS" id="42371">
    <property type="hits" value="0 hits in 3 CRISPR screens"/>
</dbReference>
<dbReference type="ChiTaRS" id="RhoGAP92B">
    <property type="organism name" value="fly"/>
</dbReference>
<dbReference type="GenomeRNAi" id="42371"/>
<dbReference type="PRO" id="PR:Q9VDS5"/>
<dbReference type="Proteomes" id="UP000000803">
    <property type="component" value="Chromosome 3R"/>
</dbReference>
<dbReference type="Bgee" id="FBgn0038747">
    <property type="expression patterns" value="Expressed in dorsal appendage forming follicle cell in ovary and 155 other cell types or tissues"/>
</dbReference>
<dbReference type="ExpressionAtlas" id="Q9VDS5">
    <property type="expression patterns" value="baseline and differential"/>
</dbReference>
<dbReference type="GO" id="GO:0005737">
    <property type="term" value="C:cytoplasm"/>
    <property type="evidence" value="ECO:0007669"/>
    <property type="project" value="InterPro"/>
</dbReference>
<dbReference type="GO" id="GO:0031594">
    <property type="term" value="C:neuromuscular junction"/>
    <property type="evidence" value="ECO:0000314"/>
    <property type="project" value="FlyBase"/>
</dbReference>
<dbReference type="GO" id="GO:0005886">
    <property type="term" value="C:plasma membrane"/>
    <property type="evidence" value="ECO:0000318"/>
    <property type="project" value="GO_Central"/>
</dbReference>
<dbReference type="GO" id="GO:0005096">
    <property type="term" value="F:GTPase activator activity"/>
    <property type="evidence" value="ECO:0000314"/>
    <property type="project" value="FlyBase"/>
</dbReference>
<dbReference type="GO" id="GO:0005543">
    <property type="term" value="F:phospholipid binding"/>
    <property type="evidence" value="ECO:0000250"/>
    <property type="project" value="FlyBase"/>
</dbReference>
<dbReference type="GO" id="GO:0017124">
    <property type="term" value="F:SH3 domain binding"/>
    <property type="evidence" value="ECO:0000353"/>
    <property type="project" value="FlyBase"/>
</dbReference>
<dbReference type="GO" id="GO:0007480">
    <property type="term" value="P:imaginal disc-derived leg morphogenesis"/>
    <property type="evidence" value="ECO:0000315"/>
    <property type="project" value="FlyBase"/>
</dbReference>
<dbReference type="GO" id="GO:0030837">
    <property type="term" value="P:negative regulation of actin filament polymerization"/>
    <property type="evidence" value="ECO:0000315"/>
    <property type="project" value="FlyBase"/>
</dbReference>
<dbReference type="GO" id="GO:0051058">
    <property type="term" value="P:negative regulation of small GTPase mediated signal transduction"/>
    <property type="evidence" value="ECO:0000318"/>
    <property type="project" value="GO_Central"/>
</dbReference>
<dbReference type="GO" id="GO:0007274">
    <property type="term" value="P:neuromuscular synaptic transmission"/>
    <property type="evidence" value="ECO:0000315"/>
    <property type="project" value="FlyBase"/>
</dbReference>
<dbReference type="GO" id="GO:0045887">
    <property type="term" value="P:positive regulation of synaptic assembly at neuromuscular junction"/>
    <property type="evidence" value="ECO:0000315"/>
    <property type="project" value="FlyBase"/>
</dbReference>
<dbReference type="GO" id="GO:0008104">
    <property type="term" value="P:protein localization"/>
    <property type="evidence" value="ECO:0000315"/>
    <property type="project" value="FlyBase"/>
</dbReference>
<dbReference type="GO" id="GO:0032956">
    <property type="term" value="P:regulation of actin cytoskeleton organization"/>
    <property type="evidence" value="ECO:0000318"/>
    <property type="project" value="GO_Central"/>
</dbReference>
<dbReference type="GO" id="GO:0035020">
    <property type="term" value="P:regulation of Rac protein signal transduction"/>
    <property type="evidence" value="ECO:0000318"/>
    <property type="project" value="GO_Central"/>
</dbReference>
<dbReference type="GO" id="GO:0007165">
    <property type="term" value="P:signal transduction"/>
    <property type="evidence" value="ECO:0007669"/>
    <property type="project" value="InterPro"/>
</dbReference>
<dbReference type="GO" id="GO:1990255">
    <property type="term" value="P:subsynaptic reticulum organization"/>
    <property type="evidence" value="ECO:0000315"/>
    <property type="project" value="FlyBase"/>
</dbReference>
<dbReference type="CDD" id="cd04386">
    <property type="entry name" value="RhoGAP_nadrin"/>
    <property type="match status" value="1"/>
</dbReference>
<dbReference type="FunFam" id="1.10.555.10:FF:000001">
    <property type="entry name" value="Rho GTPase activating protein 44"/>
    <property type="match status" value="1"/>
</dbReference>
<dbReference type="FunFam" id="1.20.1270.60:FF:000093">
    <property type="entry name" value="Rho GTPase-activating protein 92B"/>
    <property type="match status" value="1"/>
</dbReference>
<dbReference type="Gene3D" id="1.20.1270.60">
    <property type="entry name" value="Arfaptin homology (AH) domain/BAR domain"/>
    <property type="match status" value="1"/>
</dbReference>
<dbReference type="Gene3D" id="1.10.555.10">
    <property type="entry name" value="Rho GTPase activation protein"/>
    <property type="match status" value="1"/>
</dbReference>
<dbReference type="InterPro" id="IPR027267">
    <property type="entry name" value="AH/BAR_dom_sf"/>
</dbReference>
<dbReference type="InterPro" id="IPR004148">
    <property type="entry name" value="BAR_dom"/>
</dbReference>
<dbReference type="InterPro" id="IPR047165">
    <property type="entry name" value="RHG17/44/SH3BP1-like"/>
</dbReference>
<dbReference type="InterPro" id="IPR008936">
    <property type="entry name" value="Rho_GTPase_activation_prot"/>
</dbReference>
<dbReference type="InterPro" id="IPR000198">
    <property type="entry name" value="RhoGAP_dom"/>
</dbReference>
<dbReference type="PANTHER" id="PTHR14130">
    <property type="entry name" value="3BP-1 RELATED RHOGAP"/>
    <property type="match status" value="1"/>
</dbReference>
<dbReference type="PANTHER" id="PTHR14130:SF14">
    <property type="entry name" value="RHO GTPASE-ACTIVATING PROTEIN 92B"/>
    <property type="match status" value="1"/>
</dbReference>
<dbReference type="Pfam" id="PF03114">
    <property type="entry name" value="BAR"/>
    <property type="match status" value="1"/>
</dbReference>
<dbReference type="Pfam" id="PF00620">
    <property type="entry name" value="RhoGAP"/>
    <property type="match status" value="1"/>
</dbReference>
<dbReference type="SMART" id="SM00324">
    <property type="entry name" value="RhoGAP"/>
    <property type="match status" value="1"/>
</dbReference>
<dbReference type="SUPFAM" id="SSF103657">
    <property type="entry name" value="BAR/IMD domain-like"/>
    <property type="match status" value="1"/>
</dbReference>
<dbReference type="SUPFAM" id="SSF48350">
    <property type="entry name" value="GTPase activation domain, GAP"/>
    <property type="match status" value="1"/>
</dbReference>
<dbReference type="PROSITE" id="PS50238">
    <property type="entry name" value="RHOGAP"/>
    <property type="match status" value="1"/>
</dbReference>